<evidence type="ECO:0000250" key="1">
    <source>
        <dbReference type="UniProtKB" id="O35125"/>
    </source>
</evidence>
<evidence type="ECO:0000255" key="2"/>
<evidence type="ECO:0000256" key="3">
    <source>
        <dbReference type="SAM" id="MobiDB-lite"/>
    </source>
</evidence>
<evidence type="ECO:0000269" key="4">
    <source>
    </source>
</evidence>
<evidence type="ECO:0000269" key="5">
    <source>
    </source>
</evidence>
<evidence type="ECO:0000269" key="6">
    <source>
    </source>
</evidence>
<evidence type="ECO:0000269" key="7">
    <source>
    </source>
</evidence>
<evidence type="ECO:0000303" key="8">
    <source>
    </source>
</evidence>
<evidence type="ECO:0000305" key="9"/>
<evidence type="ECO:0000305" key="10">
    <source>
    </source>
</evidence>
<accession>Q53EV4</accession>
<accession>A8K8C6</accession>
<accession>D3DUT1</accession>
<accession>Q8N6K6</accession>
<accession>Q92977</accession>
<accession>Q99620</accession>
<keyword id="KW-0025">Alternative splicing</keyword>
<keyword id="KW-0966">Cell projection</keyword>
<keyword id="KW-0969">Cilium</keyword>
<keyword id="KW-0175">Coiled coil</keyword>
<keyword id="KW-0963">Cytoplasm</keyword>
<keyword id="KW-0206">Cytoskeleton</keyword>
<keyword id="KW-0225">Disease variant</keyword>
<keyword id="KW-0282">Flagellum</keyword>
<keyword id="KW-0433">Leucine-rich repeat</keyword>
<keyword id="KW-1267">Proteomics identification</keyword>
<keyword id="KW-1185">Reference proteome</keyword>
<keyword id="KW-0677">Repeat</keyword>
<organism>
    <name type="scientific">Homo sapiens</name>
    <name type="common">Human</name>
    <dbReference type="NCBI Taxonomy" id="9606"/>
    <lineage>
        <taxon>Eukaryota</taxon>
        <taxon>Metazoa</taxon>
        <taxon>Chordata</taxon>
        <taxon>Craniata</taxon>
        <taxon>Vertebrata</taxon>
        <taxon>Euteleostomi</taxon>
        <taxon>Mammalia</taxon>
        <taxon>Eutheria</taxon>
        <taxon>Euarchontoglires</taxon>
        <taxon>Primates</taxon>
        <taxon>Haplorrhini</taxon>
        <taxon>Catarrhini</taxon>
        <taxon>Hominidae</taxon>
        <taxon>Homo</taxon>
    </lineage>
</organism>
<comment type="function">
    <text evidence="6 7">Essential for sperm motility and male fertility. Plays an important role in the proper assembly of the third radial spoke (RS3) head and the bridge structure between RS2 and RS3 in the sperm flagella.</text>
</comment>
<comment type="subunit">
    <text evidence="6 7">Component of the axonemal radial spoke complex (PubMed:38091523). Interacts with RSPH3 (PubMed:37804054). Interacts with RSPH9 (PubMed:38091523).</text>
</comment>
<comment type="interaction">
    <interactant intactId="EBI-13435308">
        <id>Q53EV4</id>
    </interactant>
    <interactant intactId="EBI-747776">
        <id>Q53EZ4</id>
        <label>CEP55</label>
    </interactant>
    <organismsDiffer>false</organismsDiffer>
    <experiments>3</experiments>
</comment>
<comment type="subcellular location">
    <subcellularLocation>
        <location evidence="6">Cell projection</location>
        <location evidence="6">Cilium</location>
        <location evidence="6">Flagellum</location>
    </subcellularLocation>
    <subcellularLocation>
        <location evidence="1">Cytoplasm</location>
        <location evidence="1">Cytoskeleton</location>
        <location evidence="1">Flagellum axoneme</location>
    </subcellularLocation>
    <subcellularLocation>
        <location evidence="5">Cytoplasm</location>
    </subcellularLocation>
    <text evidence="10">Within the sperm flagellum, may be associated with the head of radial spoke 3.</text>
</comment>
<comment type="alternative products">
    <event type="alternative splicing"/>
    <isoform>
        <id>Q53EV4-1</id>
        <name>1</name>
        <sequence type="displayed"/>
    </isoform>
    <isoform>
        <id>Q53EV4-2</id>
        <name>2</name>
        <sequence type="described" ref="VSP_021889"/>
    </isoform>
</comment>
<comment type="tissue specificity">
    <text evidence="6 7">Expressed in spermatozoa.</text>
</comment>
<comment type="disease" evidence="6 7">
    <disease id="DI-06909">
        <name>Spermatogenic failure 92</name>
        <acronym>SPGF92</acronym>
        <description>An autosomal recessive, male infertility disorder characterized by asthenozoospermia and defects of the radial spokes and doublet microtubules of sperm flagellum observed by ultrastructural analysis.</description>
        <dbReference type="MIM" id="620848"/>
    </disease>
    <text>The disease is caused by variants affecting the gene represented in this entry.</text>
</comment>
<protein>
    <recommendedName>
        <fullName>Leucine-rich repeat-containing protein 23</fullName>
    </recommendedName>
    <alternativeName>
        <fullName>Leucine-rich protein B7</fullName>
    </alternativeName>
</protein>
<reference key="1">
    <citation type="journal article" date="1997" name="Genome Res.">
        <title>Large-scale sequencing in human chromosome 12p13: experimental and computational gene structure determination.</title>
        <authorList>
            <person name="Ansari-Lari M.A."/>
            <person name="Shen Y."/>
            <person name="Muzny D.M."/>
            <person name="Lee W."/>
            <person name="Gibbs R.A."/>
        </authorList>
    </citation>
    <scope>NUCLEOTIDE SEQUENCE [GENOMIC DNA / MRNA] (ISOFORM 2)</scope>
</reference>
<reference key="2">
    <citation type="journal article" date="2004" name="Nat. Genet.">
        <title>Complete sequencing and characterization of 21,243 full-length human cDNAs.</title>
        <authorList>
            <person name="Ota T."/>
            <person name="Suzuki Y."/>
            <person name="Nishikawa T."/>
            <person name="Otsuki T."/>
            <person name="Sugiyama T."/>
            <person name="Irie R."/>
            <person name="Wakamatsu A."/>
            <person name="Hayashi K."/>
            <person name="Sato H."/>
            <person name="Nagai K."/>
            <person name="Kimura K."/>
            <person name="Makita H."/>
            <person name="Sekine M."/>
            <person name="Obayashi M."/>
            <person name="Nishi T."/>
            <person name="Shibahara T."/>
            <person name="Tanaka T."/>
            <person name="Ishii S."/>
            <person name="Yamamoto J."/>
            <person name="Saito K."/>
            <person name="Kawai Y."/>
            <person name="Isono Y."/>
            <person name="Nakamura Y."/>
            <person name="Nagahari K."/>
            <person name="Murakami K."/>
            <person name="Yasuda T."/>
            <person name="Iwayanagi T."/>
            <person name="Wagatsuma M."/>
            <person name="Shiratori A."/>
            <person name="Sudo H."/>
            <person name="Hosoiri T."/>
            <person name="Kaku Y."/>
            <person name="Kodaira H."/>
            <person name="Kondo H."/>
            <person name="Sugawara M."/>
            <person name="Takahashi M."/>
            <person name="Kanda K."/>
            <person name="Yokoi T."/>
            <person name="Furuya T."/>
            <person name="Kikkawa E."/>
            <person name="Omura Y."/>
            <person name="Abe K."/>
            <person name="Kamihara K."/>
            <person name="Katsuta N."/>
            <person name="Sato K."/>
            <person name="Tanikawa M."/>
            <person name="Yamazaki M."/>
            <person name="Ninomiya K."/>
            <person name="Ishibashi T."/>
            <person name="Yamashita H."/>
            <person name="Murakawa K."/>
            <person name="Fujimori K."/>
            <person name="Tanai H."/>
            <person name="Kimata M."/>
            <person name="Watanabe M."/>
            <person name="Hiraoka S."/>
            <person name="Chiba Y."/>
            <person name="Ishida S."/>
            <person name="Ono Y."/>
            <person name="Takiguchi S."/>
            <person name="Watanabe S."/>
            <person name="Yosida M."/>
            <person name="Hotuta T."/>
            <person name="Kusano J."/>
            <person name="Kanehori K."/>
            <person name="Takahashi-Fujii A."/>
            <person name="Hara H."/>
            <person name="Tanase T.-O."/>
            <person name="Nomura Y."/>
            <person name="Togiya S."/>
            <person name="Komai F."/>
            <person name="Hara R."/>
            <person name="Takeuchi K."/>
            <person name="Arita M."/>
            <person name="Imose N."/>
            <person name="Musashino K."/>
            <person name="Yuuki H."/>
            <person name="Oshima A."/>
            <person name="Sasaki N."/>
            <person name="Aotsuka S."/>
            <person name="Yoshikawa Y."/>
            <person name="Matsunawa H."/>
            <person name="Ichihara T."/>
            <person name="Shiohata N."/>
            <person name="Sano S."/>
            <person name="Moriya S."/>
            <person name="Momiyama H."/>
            <person name="Satoh N."/>
            <person name="Takami S."/>
            <person name="Terashima Y."/>
            <person name="Suzuki O."/>
            <person name="Nakagawa S."/>
            <person name="Senoh A."/>
            <person name="Mizoguchi H."/>
            <person name="Goto Y."/>
            <person name="Shimizu F."/>
            <person name="Wakebe H."/>
            <person name="Hishigaki H."/>
            <person name="Watanabe T."/>
            <person name="Sugiyama A."/>
            <person name="Takemoto M."/>
            <person name="Kawakami B."/>
            <person name="Yamazaki M."/>
            <person name="Watanabe K."/>
            <person name="Kumagai A."/>
            <person name="Itakura S."/>
            <person name="Fukuzumi Y."/>
            <person name="Fujimori Y."/>
            <person name="Komiyama M."/>
            <person name="Tashiro H."/>
            <person name="Tanigami A."/>
            <person name="Fujiwara T."/>
            <person name="Ono T."/>
            <person name="Yamada K."/>
            <person name="Fujii Y."/>
            <person name="Ozaki K."/>
            <person name="Hirao M."/>
            <person name="Ohmori Y."/>
            <person name="Kawabata A."/>
            <person name="Hikiji T."/>
            <person name="Kobatake N."/>
            <person name="Inagaki H."/>
            <person name="Ikema Y."/>
            <person name="Okamoto S."/>
            <person name="Okitani R."/>
            <person name="Kawakami T."/>
            <person name="Noguchi S."/>
            <person name="Itoh T."/>
            <person name="Shigeta K."/>
            <person name="Senba T."/>
            <person name="Matsumura K."/>
            <person name="Nakajima Y."/>
            <person name="Mizuno T."/>
            <person name="Morinaga M."/>
            <person name="Sasaki M."/>
            <person name="Togashi T."/>
            <person name="Oyama M."/>
            <person name="Hata H."/>
            <person name="Watanabe M."/>
            <person name="Komatsu T."/>
            <person name="Mizushima-Sugano J."/>
            <person name="Satoh T."/>
            <person name="Shirai Y."/>
            <person name="Takahashi Y."/>
            <person name="Nakagawa K."/>
            <person name="Okumura K."/>
            <person name="Nagase T."/>
            <person name="Nomura N."/>
            <person name="Kikuchi H."/>
            <person name="Masuho Y."/>
            <person name="Yamashita R."/>
            <person name="Nakai K."/>
            <person name="Yada T."/>
            <person name="Nakamura Y."/>
            <person name="Ohara O."/>
            <person name="Isogai T."/>
            <person name="Sugano S."/>
        </authorList>
    </citation>
    <scope>NUCLEOTIDE SEQUENCE [LARGE SCALE MRNA] (ISOFORM 1)</scope>
    <source>
        <tissue>Testis</tissue>
    </source>
</reference>
<reference key="3">
    <citation type="submission" date="2005-04" db="EMBL/GenBank/DDBJ databases">
        <authorList>
            <person name="Totoki Y."/>
            <person name="Toyoda A."/>
            <person name="Takeda T."/>
            <person name="Sakaki Y."/>
            <person name="Tanaka A."/>
            <person name="Yokoyama S."/>
        </authorList>
    </citation>
    <scope>NUCLEOTIDE SEQUENCE [LARGE SCALE MRNA] (ISOFORM 1)</scope>
    <source>
        <tissue>Testis</tissue>
    </source>
</reference>
<reference key="4">
    <citation type="submission" date="2005-09" db="EMBL/GenBank/DDBJ databases">
        <authorList>
            <person name="Mural R.J."/>
            <person name="Istrail S."/>
            <person name="Sutton G.G."/>
            <person name="Florea L."/>
            <person name="Halpern A.L."/>
            <person name="Mobarry C.M."/>
            <person name="Lippert R."/>
            <person name="Walenz B."/>
            <person name="Shatkay H."/>
            <person name="Dew I."/>
            <person name="Miller J.R."/>
            <person name="Flanigan M.J."/>
            <person name="Edwards N.J."/>
            <person name="Bolanos R."/>
            <person name="Fasulo D."/>
            <person name="Halldorsson B.V."/>
            <person name="Hannenhalli S."/>
            <person name="Turner R."/>
            <person name="Yooseph S."/>
            <person name="Lu F."/>
            <person name="Nusskern D.R."/>
            <person name="Shue B.C."/>
            <person name="Zheng X.H."/>
            <person name="Zhong F."/>
            <person name="Delcher A.L."/>
            <person name="Huson D.H."/>
            <person name="Kravitz S.A."/>
            <person name="Mouchard L."/>
            <person name="Reinert K."/>
            <person name="Remington K.A."/>
            <person name="Clark A.G."/>
            <person name="Waterman M.S."/>
            <person name="Eichler E.E."/>
            <person name="Adams M.D."/>
            <person name="Hunkapiller M.W."/>
            <person name="Myers E.W."/>
            <person name="Venter J.C."/>
        </authorList>
    </citation>
    <scope>NUCLEOTIDE SEQUENCE [LARGE SCALE GENOMIC DNA]</scope>
</reference>
<reference key="5">
    <citation type="journal article" date="2004" name="Genome Res.">
        <title>The status, quality, and expansion of the NIH full-length cDNA project: the Mammalian Gene Collection (MGC).</title>
        <authorList>
            <consortium name="The MGC Project Team"/>
        </authorList>
    </citation>
    <scope>NUCLEOTIDE SEQUENCE [LARGE SCALE MRNA] (ISOFORM 1)</scope>
    <scope>VARIANT LEU-124</scope>
    <source>
        <tissue>Brain</tissue>
    </source>
</reference>
<reference key="6">
    <citation type="journal article" date="2023" name="Clin. Genet.">
        <title>LRRC23 deficiency causes male infertility with idiopathic asthenozoospermia by disrupting the assembly of radial spokes.</title>
        <authorList>
            <person name="Li Y."/>
            <person name="Zhang Q."/>
            <person name="Tan Q."/>
            <person name="Sha X."/>
            <person name="Gao Y."/>
            <person name="Hua R."/>
            <person name="Zhou P."/>
            <person name="Wei Z."/>
            <person name="He X."/>
            <person name="Cao Y."/>
            <person name="Li T."/>
            <person name="Wu H."/>
        </authorList>
    </citation>
    <scope>INVOLVEMENT IN SPGF92</scope>
    <scope>VARIANT SPGF92 126-ARG--ILE-343 DEL</scope>
    <scope>FUNCTION</scope>
    <scope>SUBCELLULAR LOCATION</scope>
    <scope>INTERACTION WITH RSPH3</scope>
    <scope>TISSUE SPECIFICITY</scope>
</reference>
<reference key="7">
    <citation type="journal article" date="2023" name="Elife">
        <title>LRRC23 truncation impairs radial spoke 3 head assembly and sperm motility underlying male infertility.</title>
        <authorList>
            <person name="Hwang J.Y."/>
            <person name="Chai P."/>
            <person name="Nawaz S."/>
            <person name="Choi J."/>
            <person name="Lopez-Giraldez F."/>
            <person name="Hussain S."/>
            <person name="Bilguvar K."/>
            <person name="Mane S."/>
            <person name="Lifton R.P."/>
            <person name="Ahmad W."/>
            <person name="Zhang K."/>
            <person name="Chung J.J."/>
        </authorList>
    </citation>
    <scope>INVOLVEMENT IN SPGF92</scope>
    <scope>FUNCTION</scope>
    <scope>SUBUNIT</scope>
    <scope>INTERACTION WITH RSPH9</scope>
    <scope>TISSUE SPECIFICITY</scope>
</reference>
<reference key="8">
    <citation type="journal article" date="2019" name="J. Proteome Res.">
        <title>Cell Type-Specific Expression of Testis Elevated Genes Based on Transcriptomics and Antibody-Based Proteomics.</title>
        <authorList>
            <person name="Pineau C."/>
            <person name="Hikmet F."/>
            <person name="Zhang C."/>
            <person name="Oksvold P."/>
            <person name="Chen S."/>
            <person name="Fagerberg L."/>
            <person name="Uhlen M."/>
            <person name="Lindskog C."/>
        </authorList>
    </citation>
    <scope>SUBCELLULAR LOCATION</scope>
</reference>
<name>LRC23_HUMAN</name>
<gene>
    <name type="primary">LRRC23</name>
    <name type="synonym">LRPB7</name>
</gene>
<dbReference type="EMBL" id="U47924">
    <property type="protein sequence ID" value="AAB51319.1"/>
    <property type="molecule type" value="Genomic_DNA"/>
</dbReference>
<dbReference type="EMBL" id="U72508">
    <property type="protein sequence ID" value="AAC51638.1"/>
    <property type="molecule type" value="mRNA"/>
</dbReference>
<dbReference type="EMBL" id="AK223535">
    <property type="protein sequence ID" value="BAD97255.1"/>
    <property type="molecule type" value="mRNA"/>
</dbReference>
<dbReference type="EMBL" id="AK292291">
    <property type="protein sequence ID" value="BAF84980.1"/>
    <property type="molecule type" value="mRNA"/>
</dbReference>
<dbReference type="EMBL" id="CH471116">
    <property type="protein sequence ID" value="EAW88716.1"/>
    <property type="molecule type" value="Genomic_DNA"/>
</dbReference>
<dbReference type="EMBL" id="CH471116">
    <property type="protein sequence ID" value="EAW88714.1"/>
    <property type="molecule type" value="Genomic_DNA"/>
</dbReference>
<dbReference type="EMBL" id="CH471116">
    <property type="protein sequence ID" value="EAW88715.1"/>
    <property type="molecule type" value="Genomic_DNA"/>
</dbReference>
<dbReference type="EMBL" id="BC029858">
    <property type="protein sequence ID" value="AAH29858.1"/>
    <property type="molecule type" value="mRNA"/>
</dbReference>
<dbReference type="CCDS" id="CCDS8568.1">
    <molecule id="Q53EV4-2"/>
</dbReference>
<dbReference type="CCDS" id="CCDS8569.1">
    <molecule id="Q53EV4-1"/>
</dbReference>
<dbReference type="RefSeq" id="NP_001128689.1">
    <molecule id="Q53EV4-1"/>
    <property type="nucleotide sequence ID" value="NM_001135217.2"/>
</dbReference>
<dbReference type="RefSeq" id="NP_008923.1">
    <molecule id="Q53EV4-2"/>
    <property type="nucleotide sequence ID" value="NM_006992.4"/>
</dbReference>
<dbReference type="RefSeq" id="NP_964013.1">
    <molecule id="Q53EV4-1"/>
    <property type="nucleotide sequence ID" value="NM_201650.3"/>
</dbReference>
<dbReference type="SMR" id="Q53EV4"/>
<dbReference type="BioGRID" id="115527">
    <property type="interactions" value="28"/>
</dbReference>
<dbReference type="FunCoup" id="Q53EV4">
    <property type="interactions" value="44"/>
</dbReference>
<dbReference type="IntAct" id="Q53EV4">
    <property type="interactions" value="12"/>
</dbReference>
<dbReference type="STRING" id="9606.ENSP00000390932"/>
<dbReference type="iPTMnet" id="Q53EV4"/>
<dbReference type="PhosphoSitePlus" id="Q53EV4"/>
<dbReference type="BioMuta" id="LRRC23"/>
<dbReference type="DMDM" id="119371993"/>
<dbReference type="MassIVE" id="Q53EV4"/>
<dbReference type="PaxDb" id="9606-ENSP00000390932"/>
<dbReference type="PeptideAtlas" id="Q53EV4"/>
<dbReference type="ProteomicsDB" id="62450">
    <molecule id="Q53EV4-1"/>
</dbReference>
<dbReference type="ProteomicsDB" id="62451">
    <molecule id="Q53EV4-2"/>
</dbReference>
<dbReference type="Antibodypedia" id="35084">
    <property type="antibodies" value="100 antibodies from 19 providers"/>
</dbReference>
<dbReference type="DNASU" id="10233"/>
<dbReference type="Ensembl" id="ENST00000007969.12">
    <molecule id="Q53EV4-1"/>
    <property type="protein sequence ID" value="ENSP00000007969.8"/>
    <property type="gene ID" value="ENSG00000010626.15"/>
</dbReference>
<dbReference type="Ensembl" id="ENST00000323702.9">
    <molecule id="Q53EV4-2"/>
    <property type="protein sequence ID" value="ENSP00000317464.5"/>
    <property type="gene ID" value="ENSG00000010626.15"/>
</dbReference>
<dbReference type="Ensembl" id="ENST00000443597.7">
    <molecule id="Q53EV4-1"/>
    <property type="protein sequence ID" value="ENSP00000390932.2"/>
    <property type="gene ID" value="ENSG00000010626.15"/>
</dbReference>
<dbReference type="GeneID" id="10233"/>
<dbReference type="KEGG" id="hsa:10233"/>
<dbReference type="MANE-Select" id="ENST00000443597.7">
    <property type="protein sequence ID" value="ENSP00000390932.2"/>
    <property type="RefSeq nucleotide sequence ID" value="NM_001135217.2"/>
    <property type="RefSeq protein sequence ID" value="NP_001128689.1"/>
</dbReference>
<dbReference type="UCSC" id="uc001qrp.4">
    <molecule id="Q53EV4-1"/>
    <property type="organism name" value="human"/>
</dbReference>
<dbReference type="AGR" id="HGNC:19138"/>
<dbReference type="CTD" id="10233"/>
<dbReference type="DisGeNET" id="10233"/>
<dbReference type="GeneCards" id="LRRC23"/>
<dbReference type="HGNC" id="HGNC:19138">
    <property type="gene designation" value="LRRC23"/>
</dbReference>
<dbReference type="HPA" id="ENSG00000010626">
    <property type="expression patterns" value="Tissue enhanced (fallopian)"/>
</dbReference>
<dbReference type="MalaCards" id="LRRC23"/>
<dbReference type="MIM" id="620708">
    <property type="type" value="gene"/>
</dbReference>
<dbReference type="MIM" id="620848">
    <property type="type" value="phenotype"/>
</dbReference>
<dbReference type="neXtProt" id="NX_Q53EV4"/>
<dbReference type="OpenTargets" id="ENSG00000010626"/>
<dbReference type="PharmGKB" id="PA143485529"/>
<dbReference type="VEuPathDB" id="HostDB:ENSG00000010626"/>
<dbReference type="eggNOG" id="KOG0531">
    <property type="taxonomic scope" value="Eukaryota"/>
</dbReference>
<dbReference type="GeneTree" id="ENSGT00940000159748"/>
<dbReference type="HOGENOM" id="CLU_056804_1_1_1"/>
<dbReference type="InParanoid" id="Q53EV4"/>
<dbReference type="OMA" id="NPCTDES"/>
<dbReference type="OrthoDB" id="271226at2759"/>
<dbReference type="PAN-GO" id="Q53EV4">
    <property type="GO annotations" value="2 GO annotations based on evolutionary models"/>
</dbReference>
<dbReference type="PhylomeDB" id="Q53EV4"/>
<dbReference type="TreeFam" id="TF329158"/>
<dbReference type="PathwayCommons" id="Q53EV4"/>
<dbReference type="SignaLink" id="Q53EV4"/>
<dbReference type="BioGRID-ORCS" id="10233">
    <property type="hits" value="13 hits in 1154 CRISPR screens"/>
</dbReference>
<dbReference type="ChiTaRS" id="LRRC23">
    <property type="organism name" value="human"/>
</dbReference>
<dbReference type="GeneWiki" id="LRRC23"/>
<dbReference type="GenomeRNAi" id="10233"/>
<dbReference type="Pharos" id="Q53EV4">
    <property type="development level" value="Tdark"/>
</dbReference>
<dbReference type="PRO" id="PR:Q53EV4"/>
<dbReference type="Proteomes" id="UP000005640">
    <property type="component" value="Chromosome 12"/>
</dbReference>
<dbReference type="RNAct" id="Q53EV4">
    <property type="molecule type" value="protein"/>
</dbReference>
<dbReference type="Bgee" id="ENSG00000010626">
    <property type="expression patterns" value="Expressed in right uterine tube and 146 other cell types or tissues"/>
</dbReference>
<dbReference type="ExpressionAtlas" id="Q53EV4">
    <property type="expression patterns" value="baseline and differential"/>
</dbReference>
<dbReference type="GO" id="GO:0005737">
    <property type="term" value="C:cytoplasm"/>
    <property type="evidence" value="ECO:0000314"/>
    <property type="project" value="UniProtKB"/>
</dbReference>
<dbReference type="GO" id="GO:0005856">
    <property type="term" value="C:cytoskeleton"/>
    <property type="evidence" value="ECO:0007669"/>
    <property type="project" value="UniProtKB-KW"/>
</dbReference>
<dbReference type="GO" id="GO:0005829">
    <property type="term" value="C:cytosol"/>
    <property type="evidence" value="ECO:0000318"/>
    <property type="project" value="GO_Central"/>
</dbReference>
<dbReference type="GO" id="GO:0036126">
    <property type="term" value="C:sperm flagellum"/>
    <property type="evidence" value="ECO:0000315"/>
    <property type="project" value="UniProtKB"/>
</dbReference>
<dbReference type="GO" id="GO:0030317">
    <property type="term" value="P:flagellated sperm motility"/>
    <property type="evidence" value="ECO:0000315"/>
    <property type="project" value="UniProtKB"/>
</dbReference>
<dbReference type="GO" id="GO:0062177">
    <property type="term" value="P:radial spoke assembly"/>
    <property type="evidence" value="ECO:0000315"/>
    <property type="project" value="UniProtKB"/>
</dbReference>
<dbReference type="FunFam" id="3.80.10.10:FF:000310">
    <property type="entry name" value="leucine-rich repeat-containing protein 23"/>
    <property type="match status" value="1"/>
</dbReference>
<dbReference type="FunFam" id="3.80.10.10:FF:000366">
    <property type="entry name" value="leucine-rich repeat-containing protein 23"/>
    <property type="match status" value="1"/>
</dbReference>
<dbReference type="Gene3D" id="3.80.10.10">
    <property type="entry name" value="Ribonuclease Inhibitor"/>
    <property type="match status" value="2"/>
</dbReference>
<dbReference type="InterPro" id="IPR001611">
    <property type="entry name" value="Leu-rich_rpt"/>
</dbReference>
<dbReference type="InterPro" id="IPR032675">
    <property type="entry name" value="LRR_dom_sf"/>
</dbReference>
<dbReference type="InterPro" id="IPR050836">
    <property type="entry name" value="SDS22/Internalin_LRR"/>
</dbReference>
<dbReference type="PANTHER" id="PTHR46652:SF8">
    <property type="entry name" value="LEUCINE RICH REPEAT CONTAINING 23"/>
    <property type="match status" value="1"/>
</dbReference>
<dbReference type="PANTHER" id="PTHR46652">
    <property type="entry name" value="LEUCINE-RICH REPEAT AND IQ DOMAIN-CONTAINING PROTEIN 1-RELATED"/>
    <property type="match status" value="1"/>
</dbReference>
<dbReference type="Pfam" id="PF14580">
    <property type="entry name" value="LRR_9"/>
    <property type="match status" value="1"/>
</dbReference>
<dbReference type="SMART" id="SM00365">
    <property type="entry name" value="LRR_SD22"/>
    <property type="match status" value="4"/>
</dbReference>
<dbReference type="SUPFAM" id="SSF52058">
    <property type="entry name" value="L domain-like"/>
    <property type="match status" value="1"/>
</dbReference>
<dbReference type="PROSITE" id="PS51450">
    <property type="entry name" value="LRR"/>
    <property type="match status" value="7"/>
</dbReference>
<sequence length="343" mass="39761">MSDEDDLEDSEPDQDDSEKEEDEKETEEGEDYRKEGEEFPEEWLPTPLTEDMMKEGLSLLCKTGNGLAHAYVKLEVKERDLTDIYLLRSYIHLRYVDISENHLTDLSPLNYLTHLLWLKADGNRLRSAQMNELPYLQIASFAYNQITDTEGISHPRLETLNLKGNSIHMVTGLDPEKLISLHTVELRGNQLESTLGINLPKLKNLYLAQNMLKKVEGLEDLSNLTTLHLRDNQIDTLSGFSREMKSLQYLNLRGNMVANLGELAKLRDLPKLRALVLLDNPCTDETSYRQEALVQMPYLERLDKEFYEEEERAEADVIRQRLKEEKEQEPEPQRDLEPEQSLI</sequence>
<feature type="chain" id="PRO_0000264236" description="Leucine-rich repeat-containing protein 23">
    <location>
        <begin position="1"/>
        <end position="343"/>
    </location>
</feature>
<feature type="repeat" description="LRR 1">
    <location>
        <begin position="92"/>
        <end position="113"/>
    </location>
</feature>
<feature type="repeat" description="LRR 2">
    <location>
        <begin position="114"/>
        <end position="134"/>
    </location>
</feature>
<feature type="repeat" description="LRR 3">
    <location>
        <begin position="135"/>
        <end position="155"/>
    </location>
</feature>
<feature type="repeat" description="LRR 4">
    <location>
        <begin position="156"/>
        <end position="177"/>
    </location>
</feature>
<feature type="repeat" description="LRR 5">
    <location>
        <begin position="180"/>
        <end position="200"/>
    </location>
</feature>
<feature type="repeat" description="LRR 6">
    <location>
        <begin position="201"/>
        <end position="222"/>
    </location>
</feature>
<feature type="repeat" description="LRR 7">
    <location>
        <begin position="223"/>
        <end position="244"/>
    </location>
</feature>
<feature type="repeat" description="LRR 8">
    <location>
        <begin position="246"/>
        <end position="267"/>
    </location>
</feature>
<feature type="domain" description="LRRCT">
    <location>
        <begin position="280"/>
        <end position="318"/>
    </location>
</feature>
<feature type="region of interest" description="Disordered" evidence="3">
    <location>
        <begin position="1"/>
        <end position="47"/>
    </location>
</feature>
<feature type="region of interest" description="Interaction with RSPH9" evidence="7">
    <location>
        <begin position="208"/>
        <end position="343"/>
    </location>
</feature>
<feature type="region of interest" description="Disordered" evidence="3">
    <location>
        <begin position="318"/>
        <end position="343"/>
    </location>
</feature>
<feature type="coiled-coil region" evidence="2">
    <location>
        <begin position="307"/>
        <end position="329"/>
    </location>
</feature>
<feature type="compositionally biased region" description="Acidic residues" evidence="3">
    <location>
        <begin position="1"/>
        <end position="30"/>
    </location>
</feature>
<feature type="compositionally biased region" description="Basic and acidic residues" evidence="3">
    <location>
        <begin position="318"/>
        <end position="337"/>
    </location>
</feature>
<feature type="splice variant" id="VSP_021889" description="In isoform 2." evidence="8">
    <original>GNMVANLGELAKLRDLPKLRALVLLDNPCTDETSYRQEALVQMPYLERLDKEFYEEEERAEADVIRQRLKEEKEQEPEPQRDLEPEQSLI</original>
    <variation>RSKTLAFRPDQTPRGSHHMYDREQRMPVFAPKLEIHHNLRPRICSVPVLWAVWGAEWGA</variation>
    <location>
        <begin position="254"/>
        <end position="343"/>
    </location>
</feature>
<feature type="sequence variant" id="VAR_051106" description="In dbSNP:rs2071072.">
    <original>N</original>
    <variation>H</variation>
    <location>
        <position position="65"/>
    </location>
</feature>
<feature type="sequence variant" id="VAR_051107" description="In dbSNP:rs2071073." evidence="4">
    <original>R</original>
    <variation>L</variation>
    <location>
        <position position="124"/>
    </location>
</feature>
<feature type="sequence variant" id="VAR_089372" description="In SPGF92; likely pathogenic; loss of expression in spermatozoa." evidence="6">
    <location>
        <begin position="126"/>
        <end position="343"/>
    </location>
</feature>
<feature type="sequence variant" id="VAR_051108" description="In dbSNP:rs1057077.">
    <original>V</original>
    <variation>E</variation>
    <location>
        <position position="317"/>
    </location>
</feature>
<feature type="sequence conflict" description="In Ref. 3; BAD97255." evidence="9" ref="3">
    <original>S</original>
    <variation>P</variation>
    <location>
        <position position="153"/>
    </location>
</feature>
<feature type="sequence conflict" description="In Ref. 1; AAC51638." evidence="9" ref="1">
    <original>E</original>
    <variation>G</variation>
    <location sequence="Q53EV4-2">
        <position position="276"/>
    </location>
</feature>
<proteinExistence type="evidence at protein level"/>